<accession>Q2S9C3</accession>
<dbReference type="EC" id="2.1.1.182" evidence="1"/>
<dbReference type="EMBL" id="CP000155">
    <property type="protein sequence ID" value="ABC32751.1"/>
    <property type="molecule type" value="Genomic_DNA"/>
</dbReference>
<dbReference type="RefSeq" id="WP_011399809.1">
    <property type="nucleotide sequence ID" value="NC_007645.1"/>
</dbReference>
<dbReference type="SMR" id="Q2S9C3"/>
<dbReference type="STRING" id="349521.HCH_06103"/>
<dbReference type="KEGG" id="hch:HCH_06103"/>
<dbReference type="eggNOG" id="COG0030">
    <property type="taxonomic scope" value="Bacteria"/>
</dbReference>
<dbReference type="HOGENOM" id="CLU_041220_0_1_6"/>
<dbReference type="OrthoDB" id="9814755at2"/>
<dbReference type="Proteomes" id="UP000000238">
    <property type="component" value="Chromosome"/>
</dbReference>
<dbReference type="GO" id="GO:0005829">
    <property type="term" value="C:cytosol"/>
    <property type="evidence" value="ECO:0007669"/>
    <property type="project" value="TreeGrafter"/>
</dbReference>
<dbReference type="GO" id="GO:0052908">
    <property type="term" value="F:16S rRNA (adenine(1518)-N(6)/adenine(1519)-N(6))-dimethyltransferase activity"/>
    <property type="evidence" value="ECO:0007669"/>
    <property type="project" value="UniProtKB-EC"/>
</dbReference>
<dbReference type="GO" id="GO:0003723">
    <property type="term" value="F:RNA binding"/>
    <property type="evidence" value="ECO:0007669"/>
    <property type="project" value="UniProtKB-KW"/>
</dbReference>
<dbReference type="CDD" id="cd02440">
    <property type="entry name" value="AdoMet_MTases"/>
    <property type="match status" value="1"/>
</dbReference>
<dbReference type="FunFam" id="1.10.8.100:FF:000001">
    <property type="entry name" value="Ribosomal RNA small subunit methyltransferase A"/>
    <property type="match status" value="1"/>
</dbReference>
<dbReference type="FunFam" id="3.40.50.150:FF:000023">
    <property type="entry name" value="Ribosomal RNA small subunit methyltransferase A"/>
    <property type="match status" value="1"/>
</dbReference>
<dbReference type="Gene3D" id="1.10.8.100">
    <property type="entry name" value="Ribosomal RNA adenine dimethylase-like, domain 2"/>
    <property type="match status" value="1"/>
</dbReference>
<dbReference type="Gene3D" id="3.40.50.150">
    <property type="entry name" value="Vaccinia Virus protein VP39"/>
    <property type="match status" value="1"/>
</dbReference>
<dbReference type="HAMAP" id="MF_00607">
    <property type="entry name" value="16SrRNA_methyltr_A"/>
    <property type="match status" value="1"/>
</dbReference>
<dbReference type="InterPro" id="IPR001737">
    <property type="entry name" value="KsgA/Erm"/>
</dbReference>
<dbReference type="InterPro" id="IPR023165">
    <property type="entry name" value="rRNA_Ade_diMease-like_C"/>
</dbReference>
<dbReference type="InterPro" id="IPR020596">
    <property type="entry name" value="rRNA_Ade_Mease_Trfase_CS"/>
</dbReference>
<dbReference type="InterPro" id="IPR020598">
    <property type="entry name" value="rRNA_Ade_methylase_Trfase_N"/>
</dbReference>
<dbReference type="InterPro" id="IPR011530">
    <property type="entry name" value="rRNA_adenine_dimethylase"/>
</dbReference>
<dbReference type="InterPro" id="IPR029063">
    <property type="entry name" value="SAM-dependent_MTases_sf"/>
</dbReference>
<dbReference type="NCBIfam" id="TIGR00755">
    <property type="entry name" value="ksgA"/>
    <property type="match status" value="1"/>
</dbReference>
<dbReference type="PANTHER" id="PTHR11727">
    <property type="entry name" value="DIMETHYLADENOSINE TRANSFERASE"/>
    <property type="match status" value="1"/>
</dbReference>
<dbReference type="PANTHER" id="PTHR11727:SF7">
    <property type="entry name" value="DIMETHYLADENOSINE TRANSFERASE-RELATED"/>
    <property type="match status" value="1"/>
</dbReference>
<dbReference type="Pfam" id="PF00398">
    <property type="entry name" value="RrnaAD"/>
    <property type="match status" value="1"/>
</dbReference>
<dbReference type="SMART" id="SM00650">
    <property type="entry name" value="rADc"/>
    <property type="match status" value="1"/>
</dbReference>
<dbReference type="SUPFAM" id="SSF53335">
    <property type="entry name" value="S-adenosyl-L-methionine-dependent methyltransferases"/>
    <property type="match status" value="1"/>
</dbReference>
<dbReference type="PROSITE" id="PS01131">
    <property type="entry name" value="RRNA_A_DIMETH"/>
    <property type="match status" value="1"/>
</dbReference>
<dbReference type="PROSITE" id="PS51689">
    <property type="entry name" value="SAM_RNA_A_N6_MT"/>
    <property type="match status" value="1"/>
</dbReference>
<keyword id="KW-0963">Cytoplasm</keyword>
<keyword id="KW-0489">Methyltransferase</keyword>
<keyword id="KW-1185">Reference proteome</keyword>
<keyword id="KW-0694">RNA-binding</keyword>
<keyword id="KW-0698">rRNA processing</keyword>
<keyword id="KW-0949">S-adenosyl-L-methionine</keyword>
<keyword id="KW-0808">Transferase</keyword>
<protein>
    <recommendedName>
        <fullName evidence="1">Ribosomal RNA small subunit methyltransferase A</fullName>
        <ecNumber evidence="1">2.1.1.182</ecNumber>
    </recommendedName>
    <alternativeName>
        <fullName evidence="1">16S rRNA (adenine(1518)-N(6)/adenine(1519)-N(6))-dimethyltransferase</fullName>
    </alternativeName>
    <alternativeName>
        <fullName evidence="1">16S rRNA dimethyladenosine transferase</fullName>
    </alternativeName>
    <alternativeName>
        <fullName evidence="1">16S rRNA dimethylase</fullName>
    </alternativeName>
    <alternativeName>
        <fullName evidence="1">S-adenosylmethionine-6-N', N'-adenosyl(rRNA) dimethyltransferase</fullName>
    </alternativeName>
</protein>
<comment type="function">
    <text evidence="1">Specifically dimethylates two adjacent adenosines (A1518 and A1519) in the loop of a conserved hairpin near the 3'-end of 16S rRNA in the 30S particle. May play a critical role in biogenesis of 30S subunits.</text>
</comment>
<comment type="catalytic activity">
    <reaction evidence="1">
        <text>adenosine(1518)/adenosine(1519) in 16S rRNA + 4 S-adenosyl-L-methionine = N(6)-dimethyladenosine(1518)/N(6)-dimethyladenosine(1519) in 16S rRNA + 4 S-adenosyl-L-homocysteine + 4 H(+)</text>
        <dbReference type="Rhea" id="RHEA:19609"/>
        <dbReference type="Rhea" id="RHEA-COMP:10232"/>
        <dbReference type="Rhea" id="RHEA-COMP:10233"/>
        <dbReference type="ChEBI" id="CHEBI:15378"/>
        <dbReference type="ChEBI" id="CHEBI:57856"/>
        <dbReference type="ChEBI" id="CHEBI:59789"/>
        <dbReference type="ChEBI" id="CHEBI:74411"/>
        <dbReference type="ChEBI" id="CHEBI:74493"/>
        <dbReference type="EC" id="2.1.1.182"/>
    </reaction>
</comment>
<comment type="subcellular location">
    <subcellularLocation>
        <location evidence="1">Cytoplasm</location>
    </subcellularLocation>
</comment>
<comment type="similarity">
    <text evidence="1">Belongs to the class I-like SAM-binding methyltransferase superfamily. rRNA adenine N(6)-methyltransferase family. RsmA subfamily.</text>
</comment>
<reference key="1">
    <citation type="journal article" date="2005" name="Nucleic Acids Res.">
        <title>Genomic blueprint of Hahella chejuensis, a marine microbe producing an algicidal agent.</title>
        <authorList>
            <person name="Jeong H."/>
            <person name="Yim J.H."/>
            <person name="Lee C."/>
            <person name="Choi S.-H."/>
            <person name="Park Y.K."/>
            <person name="Yoon S.H."/>
            <person name="Hur C.-G."/>
            <person name="Kang H.-Y."/>
            <person name="Kim D."/>
            <person name="Lee H.H."/>
            <person name="Park K.H."/>
            <person name="Park S.-H."/>
            <person name="Park H.-S."/>
            <person name="Lee H.K."/>
            <person name="Oh T.K."/>
            <person name="Kim J.F."/>
        </authorList>
    </citation>
    <scope>NUCLEOTIDE SEQUENCE [LARGE SCALE GENOMIC DNA]</scope>
    <source>
        <strain>KCTC 2396</strain>
    </source>
</reference>
<evidence type="ECO:0000255" key="1">
    <source>
        <dbReference type="HAMAP-Rule" id="MF_00607"/>
    </source>
</evidence>
<proteinExistence type="inferred from homology"/>
<gene>
    <name evidence="1" type="primary">rsmA</name>
    <name evidence="1" type="synonym">ksgA</name>
    <name type="ordered locus">HCH_06103</name>
</gene>
<feature type="chain" id="PRO_0000257294" description="Ribosomal RNA small subunit methyltransferase A">
    <location>
        <begin position="1"/>
        <end position="273"/>
    </location>
</feature>
<feature type="binding site" evidence="1">
    <location>
        <position position="19"/>
    </location>
    <ligand>
        <name>S-adenosyl-L-methionine</name>
        <dbReference type="ChEBI" id="CHEBI:59789"/>
    </ligand>
</feature>
<feature type="binding site" evidence="1">
    <location>
        <position position="21"/>
    </location>
    <ligand>
        <name>S-adenosyl-L-methionine</name>
        <dbReference type="ChEBI" id="CHEBI:59789"/>
    </ligand>
</feature>
<feature type="binding site" evidence="1">
    <location>
        <position position="46"/>
    </location>
    <ligand>
        <name>S-adenosyl-L-methionine</name>
        <dbReference type="ChEBI" id="CHEBI:59789"/>
    </ligand>
</feature>
<feature type="binding site" evidence="1">
    <location>
        <position position="67"/>
    </location>
    <ligand>
        <name>S-adenosyl-L-methionine</name>
        <dbReference type="ChEBI" id="CHEBI:59789"/>
    </ligand>
</feature>
<feature type="binding site" evidence="1">
    <location>
        <position position="92"/>
    </location>
    <ligand>
        <name>S-adenosyl-L-methionine</name>
        <dbReference type="ChEBI" id="CHEBI:59789"/>
    </ligand>
</feature>
<feature type="binding site" evidence="1">
    <location>
        <position position="113"/>
    </location>
    <ligand>
        <name>S-adenosyl-L-methionine</name>
        <dbReference type="ChEBI" id="CHEBI:59789"/>
    </ligand>
</feature>
<organism>
    <name type="scientific">Hahella chejuensis (strain KCTC 2396)</name>
    <dbReference type="NCBI Taxonomy" id="349521"/>
    <lineage>
        <taxon>Bacteria</taxon>
        <taxon>Pseudomonadati</taxon>
        <taxon>Pseudomonadota</taxon>
        <taxon>Gammaproteobacteria</taxon>
        <taxon>Oceanospirillales</taxon>
        <taxon>Hahellaceae</taxon>
        <taxon>Hahella</taxon>
    </lineage>
</organism>
<name>RSMA_HAHCH</name>
<sequence length="273" mass="30884">MGRHNENIGHQARKRFGQNFLHDQGVIDRIVRSINPKSDQNLVEIGPGLGALTEELLKSGGSVTAVELDRDLTPILRTKFFNYPQFNVIEADALKFDFTQLATPERPMRLIGNLPYNISTPLIFHLLTFRGLVQDMYFMLQKEVVDRLAAKPGEDAYGRLGVMAQYYCKVESLFNVGPGAFQPAPKVWSAIVRLTPYTEPPLACKDVATLTTVVRQAFAMRRKTLRNTLKQLITVDALQSLDIDPQIRPERLGLPEFVRIADYVYDHPLENES</sequence>